<organism>
    <name type="scientific">Symbiobacterium thermophilum (strain DSM 24528 / JCM 14929 / IAM 14863 / T)</name>
    <dbReference type="NCBI Taxonomy" id="292459"/>
    <lineage>
        <taxon>Bacteria</taxon>
        <taxon>Bacillati</taxon>
        <taxon>Bacillota</taxon>
        <taxon>Clostridia</taxon>
        <taxon>Eubacteriales</taxon>
        <taxon>Symbiobacteriaceae</taxon>
        <taxon>Symbiobacterium</taxon>
    </lineage>
</organism>
<accession>Q67Q93</accession>
<protein>
    <recommendedName>
        <fullName evidence="1">S-adenosylmethionine:tRNA ribosyltransferase-isomerase</fullName>
        <ecNumber evidence="1">2.4.99.17</ecNumber>
    </recommendedName>
    <alternativeName>
        <fullName evidence="1">Queuosine biosynthesis protein QueA</fullName>
    </alternativeName>
</protein>
<gene>
    <name evidence="1" type="primary">queA</name>
    <name type="ordered locus">STH1165</name>
</gene>
<proteinExistence type="inferred from homology"/>
<reference key="1">
    <citation type="journal article" date="2004" name="Nucleic Acids Res.">
        <title>Genome sequence of Symbiobacterium thermophilum, an uncultivable bacterium that depends on microbial commensalism.</title>
        <authorList>
            <person name="Ueda K."/>
            <person name="Yamashita A."/>
            <person name="Ishikawa J."/>
            <person name="Shimada M."/>
            <person name="Watsuji T."/>
            <person name="Morimura K."/>
            <person name="Ikeda H."/>
            <person name="Hattori M."/>
            <person name="Beppu T."/>
        </authorList>
    </citation>
    <scope>NUCLEOTIDE SEQUENCE [LARGE SCALE GENOMIC DNA]</scope>
    <source>
        <strain>DSM 24528 / JCM 14929 / IAM 14863 / T</strain>
    </source>
</reference>
<evidence type="ECO:0000255" key="1">
    <source>
        <dbReference type="HAMAP-Rule" id="MF_00113"/>
    </source>
</evidence>
<name>QUEA_SYMTH</name>
<sequence>MRLSDFDYDLPKELIAQKPVEPRDASRLMVVHRASGAIEHRCFRDLPEYLRPGDGLVINETRVMPARLLGSREQTGGAMEVLLLKRLDRDRWETLVKPGKKARPGERIVFGDGLLVGTVVGPTDYGGRVIDFHYEGVFENLLERLGQMPLPPYIHEQLEEPERYQTVYAREWGSAAAPTAGLHFTAELLDRLAARGVEIHRITLHVGLGTFRPVEVEDPTQHKMHSEFYHVSPEAAAGINAVRKGGGRLVAVGTTSVRTLETVADEDGTVRPGEGWTDIFIYPGYRFKAVDALVTNFHLPKSTLLMLVSALAGHDLIMRAYREAVAQRYRFFSFGDAMLIL</sequence>
<comment type="function">
    <text evidence="1">Transfers and isomerizes the ribose moiety from AdoMet to the 7-aminomethyl group of 7-deazaguanine (preQ1-tRNA) to give epoxyqueuosine (oQ-tRNA).</text>
</comment>
<comment type="catalytic activity">
    <reaction evidence="1">
        <text>7-aminomethyl-7-carbaguanosine(34) in tRNA + S-adenosyl-L-methionine = epoxyqueuosine(34) in tRNA + adenine + L-methionine + 2 H(+)</text>
        <dbReference type="Rhea" id="RHEA:32155"/>
        <dbReference type="Rhea" id="RHEA-COMP:10342"/>
        <dbReference type="Rhea" id="RHEA-COMP:18582"/>
        <dbReference type="ChEBI" id="CHEBI:15378"/>
        <dbReference type="ChEBI" id="CHEBI:16708"/>
        <dbReference type="ChEBI" id="CHEBI:57844"/>
        <dbReference type="ChEBI" id="CHEBI:59789"/>
        <dbReference type="ChEBI" id="CHEBI:82833"/>
        <dbReference type="ChEBI" id="CHEBI:194443"/>
        <dbReference type="EC" id="2.4.99.17"/>
    </reaction>
</comment>
<comment type="pathway">
    <text evidence="1">tRNA modification; tRNA-queuosine biosynthesis.</text>
</comment>
<comment type="subunit">
    <text evidence="1">Monomer.</text>
</comment>
<comment type="subcellular location">
    <subcellularLocation>
        <location evidence="1">Cytoplasm</location>
    </subcellularLocation>
</comment>
<comment type="similarity">
    <text evidence="1">Belongs to the QueA family.</text>
</comment>
<feature type="chain" id="PRO_0000231382" description="S-adenosylmethionine:tRNA ribosyltransferase-isomerase">
    <location>
        <begin position="1"/>
        <end position="341"/>
    </location>
</feature>
<dbReference type="EC" id="2.4.99.17" evidence="1"/>
<dbReference type="EMBL" id="AP006840">
    <property type="protein sequence ID" value="BAD40150.1"/>
    <property type="molecule type" value="Genomic_DNA"/>
</dbReference>
<dbReference type="RefSeq" id="WP_011195296.1">
    <property type="nucleotide sequence ID" value="NC_006177.1"/>
</dbReference>
<dbReference type="SMR" id="Q67Q93"/>
<dbReference type="STRING" id="292459.STH1165"/>
<dbReference type="KEGG" id="sth:STH1165"/>
<dbReference type="eggNOG" id="COG0809">
    <property type="taxonomic scope" value="Bacteria"/>
</dbReference>
<dbReference type="HOGENOM" id="CLU_039110_1_0_9"/>
<dbReference type="OrthoDB" id="9805933at2"/>
<dbReference type="UniPathway" id="UPA00392"/>
<dbReference type="Proteomes" id="UP000000417">
    <property type="component" value="Chromosome"/>
</dbReference>
<dbReference type="GO" id="GO:0005737">
    <property type="term" value="C:cytoplasm"/>
    <property type="evidence" value="ECO:0007669"/>
    <property type="project" value="UniProtKB-SubCell"/>
</dbReference>
<dbReference type="GO" id="GO:0051075">
    <property type="term" value="F:S-adenosylmethionine:tRNA ribosyltransferase-isomerase activity"/>
    <property type="evidence" value="ECO:0007669"/>
    <property type="project" value="UniProtKB-EC"/>
</dbReference>
<dbReference type="GO" id="GO:0008616">
    <property type="term" value="P:queuosine biosynthetic process"/>
    <property type="evidence" value="ECO:0007669"/>
    <property type="project" value="UniProtKB-UniRule"/>
</dbReference>
<dbReference type="GO" id="GO:0002099">
    <property type="term" value="P:tRNA wobble guanine modification"/>
    <property type="evidence" value="ECO:0007669"/>
    <property type="project" value="TreeGrafter"/>
</dbReference>
<dbReference type="FunFam" id="2.40.10.240:FF:000002">
    <property type="entry name" value="S-adenosylmethionine:tRNA ribosyltransferase-isomerase"/>
    <property type="match status" value="1"/>
</dbReference>
<dbReference type="FunFam" id="3.40.1780.10:FF:000001">
    <property type="entry name" value="S-adenosylmethionine:tRNA ribosyltransferase-isomerase"/>
    <property type="match status" value="1"/>
</dbReference>
<dbReference type="Gene3D" id="2.40.10.240">
    <property type="entry name" value="QueA-like"/>
    <property type="match status" value="1"/>
</dbReference>
<dbReference type="Gene3D" id="3.40.1780.10">
    <property type="entry name" value="QueA-like"/>
    <property type="match status" value="1"/>
</dbReference>
<dbReference type="HAMAP" id="MF_00113">
    <property type="entry name" value="QueA"/>
    <property type="match status" value="1"/>
</dbReference>
<dbReference type="InterPro" id="IPR003699">
    <property type="entry name" value="QueA"/>
</dbReference>
<dbReference type="InterPro" id="IPR042118">
    <property type="entry name" value="QueA_dom1"/>
</dbReference>
<dbReference type="InterPro" id="IPR042119">
    <property type="entry name" value="QueA_dom2"/>
</dbReference>
<dbReference type="InterPro" id="IPR036100">
    <property type="entry name" value="QueA_sf"/>
</dbReference>
<dbReference type="NCBIfam" id="NF001140">
    <property type="entry name" value="PRK00147.1"/>
    <property type="match status" value="1"/>
</dbReference>
<dbReference type="NCBIfam" id="TIGR00113">
    <property type="entry name" value="queA"/>
    <property type="match status" value="1"/>
</dbReference>
<dbReference type="PANTHER" id="PTHR30307">
    <property type="entry name" value="S-ADENOSYLMETHIONINE:TRNA RIBOSYLTRANSFERASE-ISOMERASE"/>
    <property type="match status" value="1"/>
</dbReference>
<dbReference type="PANTHER" id="PTHR30307:SF0">
    <property type="entry name" value="S-ADENOSYLMETHIONINE:TRNA RIBOSYLTRANSFERASE-ISOMERASE"/>
    <property type="match status" value="1"/>
</dbReference>
<dbReference type="Pfam" id="PF02547">
    <property type="entry name" value="Queuosine_synth"/>
    <property type="match status" value="1"/>
</dbReference>
<dbReference type="SUPFAM" id="SSF111337">
    <property type="entry name" value="QueA-like"/>
    <property type="match status" value="1"/>
</dbReference>
<keyword id="KW-0963">Cytoplasm</keyword>
<keyword id="KW-0671">Queuosine biosynthesis</keyword>
<keyword id="KW-1185">Reference proteome</keyword>
<keyword id="KW-0949">S-adenosyl-L-methionine</keyword>
<keyword id="KW-0808">Transferase</keyword>